<protein>
    <recommendedName>
        <fullName evidence="2">D-alanine--D-alanine ligase</fullName>
        <ecNumber evidence="2">6.3.2.4</ecNumber>
    </recommendedName>
    <alternativeName>
        <fullName evidence="2">D-Ala-D-Ala ligase</fullName>
    </alternativeName>
    <alternativeName>
        <fullName evidence="2">D-alanylalanine synthetase</fullName>
    </alternativeName>
</protein>
<accession>Q82JS5</accession>
<name>DDL_STRAW</name>
<comment type="function">
    <text evidence="2">Cell wall formation.</text>
</comment>
<comment type="catalytic activity">
    <reaction evidence="2">
        <text>2 D-alanine + ATP = D-alanyl-D-alanine + ADP + phosphate + H(+)</text>
        <dbReference type="Rhea" id="RHEA:11224"/>
        <dbReference type="ChEBI" id="CHEBI:15378"/>
        <dbReference type="ChEBI" id="CHEBI:30616"/>
        <dbReference type="ChEBI" id="CHEBI:43474"/>
        <dbReference type="ChEBI" id="CHEBI:57416"/>
        <dbReference type="ChEBI" id="CHEBI:57822"/>
        <dbReference type="ChEBI" id="CHEBI:456216"/>
        <dbReference type="EC" id="6.3.2.4"/>
    </reaction>
</comment>
<comment type="cofactor">
    <cofactor evidence="1">
        <name>Mg(2+)</name>
        <dbReference type="ChEBI" id="CHEBI:18420"/>
    </cofactor>
    <cofactor evidence="1">
        <name>Mn(2+)</name>
        <dbReference type="ChEBI" id="CHEBI:29035"/>
    </cofactor>
    <text evidence="1">Binds 2 magnesium or manganese ions per subunit.</text>
</comment>
<comment type="pathway">
    <text evidence="2">Cell wall biogenesis; peptidoglycan biosynthesis.</text>
</comment>
<comment type="subcellular location">
    <subcellularLocation>
        <location evidence="2">Cytoplasm</location>
    </subcellularLocation>
</comment>
<comment type="similarity">
    <text evidence="2">Belongs to the D-alanine--D-alanine ligase family.</text>
</comment>
<evidence type="ECO:0000250" key="1"/>
<evidence type="ECO:0000255" key="2">
    <source>
        <dbReference type="HAMAP-Rule" id="MF_00047"/>
    </source>
</evidence>
<feature type="chain" id="PRO_0000177884" description="D-alanine--D-alanine ligase">
    <location>
        <begin position="1"/>
        <end position="385"/>
    </location>
</feature>
<feature type="domain" description="ATP-grasp" evidence="2">
    <location>
        <begin position="165"/>
        <end position="375"/>
    </location>
</feature>
<feature type="binding site" evidence="2">
    <location>
        <begin position="201"/>
        <end position="256"/>
    </location>
    <ligand>
        <name>ATP</name>
        <dbReference type="ChEBI" id="CHEBI:30616"/>
    </ligand>
</feature>
<feature type="binding site" evidence="2">
    <location>
        <position position="329"/>
    </location>
    <ligand>
        <name>Mg(2+)</name>
        <dbReference type="ChEBI" id="CHEBI:18420"/>
        <label>1</label>
    </ligand>
</feature>
<feature type="binding site" evidence="2">
    <location>
        <position position="342"/>
    </location>
    <ligand>
        <name>Mg(2+)</name>
        <dbReference type="ChEBI" id="CHEBI:18420"/>
        <label>1</label>
    </ligand>
</feature>
<feature type="binding site" evidence="2">
    <location>
        <position position="342"/>
    </location>
    <ligand>
        <name>Mg(2+)</name>
        <dbReference type="ChEBI" id="CHEBI:18420"/>
        <label>2</label>
    </ligand>
</feature>
<feature type="binding site" evidence="2">
    <location>
        <position position="344"/>
    </location>
    <ligand>
        <name>Mg(2+)</name>
        <dbReference type="ChEBI" id="CHEBI:18420"/>
        <label>2</label>
    </ligand>
</feature>
<reference key="1">
    <citation type="journal article" date="2001" name="Proc. Natl. Acad. Sci. U.S.A.">
        <title>Genome sequence of an industrial microorganism Streptomyces avermitilis: deducing the ability of producing secondary metabolites.</title>
        <authorList>
            <person name="Omura S."/>
            <person name="Ikeda H."/>
            <person name="Ishikawa J."/>
            <person name="Hanamoto A."/>
            <person name="Takahashi C."/>
            <person name="Shinose M."/>
            <person name="Takahashi Y."/>
            <person name="Horikawa H."/>
            <person name="Nakazawa H."/>
            <person name="Osonoe T."/>
            <person name="Kikuchi H."/>
            <person name="Shiba T."/>
            <person name="Sakaki Y."/>
            <person name="Hattori M."/>
        </authorList>
    </citation>
    <scope>NUCLEOTIDE SEQUENCE [LARGE SCALE GENOMIC DNA]</scope>
    <source>
        <strain>ATCC 31267 / DSM 46492 / JCM 5070 / NBRC 14893 / NCIMB 12804 / NRRL 8165 / MA-4680</strain>
    </source>
</reference>
<reference key="2">
    <citation type="journal article" date="2003" name="Nat. Biotechnol.">
        <title>Complete genome sequence and comparative analysis of the industrial microorganism Streptomyces avermitilis.</title>
        <authorList>
            <person name="Ikeda H."/>
            <person name="Ishikawa J."/>
            <person name="Hanamoto A."/>
            <person name="Shinose M."/>
            <person name="Kikuchi H."/>
            <person name="Shiba T."/>
            <person name="Sakaki Y."/>
            <person name="Hattori M."/>
            <person name="Omura S."/>
        </authorList>
    </citation>
    <scope>NUCLEOTIDE SEQUENCE [LARGE SCALE GENOMIC DNA]</scope>
    <source>
        <strain>ATCC 31267 / DSM 46492 / JCM 5070 / NBRC 14893 / NCIMB 12804 / NRRL 8165 / MA-4680</strain>
    </source>
</reference>
<sequence length="385" mass="41905">MSTENLPQSPEQPPRKPRVAVVFGGRSSEHGISVVTAGAVLRAIDRTKYDVLPIGITRDGRWALTADEPERMAITDRRTPSVEELAESNEGGVILPVDPANREVVYSEPGSVPKALGEVDVVFPVLHGPYGEDGTLQGLLELSGVPYVGAGVLASAVGQDKEYMKRVFTSFGLKVGPYVVIRPREWERDESAARRKIVDFAGEHGWPLFVKPARAGSSIGITKVDDLAGLDEAVAEAQRHDPKIIVEALLRGREIECGVLEFEDGPRASVPAEIPPAQSHAYYDFEAKYIDSTPGIVPAPLTPEETAEVRRLAVEAFEATSCEGLVRADFFLTEDGDFVINEINTMPGFTPISMYPQMWQASGIAYPELVDRLVEAALRRSTGLR</sequence>
<organism>
    <name type="scientific">Streptomyces avermitilis (strain ATCC 31267 / DSM 46492 / JCM 5070 / NBRC 14893 / NCIMB 12804 / NRRL 8165 / MA-4680)</name>
    <dbReference type="NCBI Taxonomy" id="227882"/>
    <lineage>
        <taxon>Bacteria</taxon>
        <taxon>Bacillati</taxon>
        <taxon>Actinomycetota</taxon>
        <taxon>Actinomycetes</taxon>
        <taxon>Kitasatosporales</taxon>
        <taxon>Streptomycetaceae</taxon>
        <taxon>Streptomyces</taxon>
    </lineage>
</organism>
<proteinExistence type="inferred from homology"/>
<gene>
    <name evidence="2" type="primary">ddl</name>
    <name type="synonym">ddlA</name>
    <name type="ordered locus">SAV_2679</name>
</gene>
<dbReference type="EC" id="6.3.2.4" evidence="2"/>
<dbReference type="EMBL" id="BA000030">
    <property type="protein sequence ID" value="BAC70390.1"/>
    <property type="molecule type" value="Genomic_DNA"/>
</dbReference>
<dbReference type="RefSeq" id="WP_010984111.1">
    <property type="nucleotide sequence ID" value="NZ_JZJK01000071.1"/>
</dbReference>
<dbReference type="SMR" id="Q82JS5"/>
<dbReference type="GeneID" id="41539762"/>
<dbReference type="KEGG" id="sma:SAVERM_2679"/>
<dbReference type="eggNOG" id="COG1181">
    <property type="taxonomic scope" value="Bacteria"/>
</dbReference>
<dbReference type="HOGENOM" id="CLU_039268_0_0_11"/>
<dbReference type="OrthoDB" id="9813261at2"/>
<dbReference type="UniPathway" id="UPA00219"/>
<dbReference type="Proteomes" id="UP000000428">
    <property type="component" value="Chromosome"/>
</dbReference>
<dbReference type="GO" id="GO:0005829">
    <property type="term" value="C:cytosol"/>
    <property type="evidence" value="ECO:0007669"/>
    <property type="project" value="TreeGrafter"/>
</dbReference>
<dbReference type="GO" id="GO:0005524">
    <property type="term" value="F:ATP binding"/>
    <property type="evidence" value="ECO:0007669"/>
    <property type="project" value="UniProtKB-KW"/>
</dbReference>
<dbReference type="GO" id="GO:0008716">
    <property type="term" value="F:D-alanine-D-alanine ligase activity"/>
    <property type="evidence" value="ECO:0007669"/>
    <property type="project" value="UniProtKB-UniRule"/>
</dbReference>
<dbReference type="GO" id="GO:0046872">
    <property type="term" value="F:metal ion binding"/>
    <property type="evidence" value="ECO:0007669"/>
    <property type="project" value="UniProtKB-KW"/>
</dbReference>
<dbReference type="GO" id="GO:0071555">
    <property type="term" value="P:cell wall organization"/>
    <property type="evidence" value="ECO:0007669"/>
    <property type="project" value="UniProtKB-KW"/>
</dbReference>
<dbReference type="GO" id="GO:0009252">
    <property type="term" value="P:peptidoglycan biosynthetic process"/>
    <property type="evidence" value="ECO:0007669"/>
    <property type="project" value="UniProtKB-UniRule"/>
</dbReference>
<dbReference type="GO" id="GO:0008360">
    <property type="term" value="P:regulation of cell shape"/>
    <property type="evidence" value="ECO:0007669"/>
    <property type="project" value="UniProtKB-KW"/>
</dbReference>
<dbReference type="FunFam" id="3.30.470.20:FF:000008">
    <property type="entry name" value="D-alanine--D-alanine ligase"/>
    <property type="match status" value="1"/>
</dbReference>
<dbReference type="Gene3D" id="3.40.50.20">
    <property type="match status" value="1"/>
</dbReference>
<dbReference type="Gene3D" id="3.30.1490.20">
    <property type="entry name" value="ATP-grasp fold, A domain"/>
    <property type="match status" value="1"/>
</dbReference>
<dbReference type="Gene3D" id="3.30.470.20">
    <property type="entry name" value="ATP-grasp fold, B domain"/>
    <property type="match status" value="1"/>
</dbReference>
<dbReference type="HAMAP" id="MF_00047">
    <property type="entry name" value="Dala_Dala_lig"/>
    <property type="match status" value="1"/>
</dbReference>
<dbReference type="InterPro" id="IPR011761">
    <property type="entry name" value="ATP-grasp"/>
</dbReference>
<dbReference type="InterPro" id="IPR013815">
    <property type="entry name" value="ATP_grasp_subdomain_1"/>
</dbReference>
<dbReference type="InterPro" id="IPR000291">
    <property type="entry name" value="D-Ala_lig_Van_CS"/>
</dbReference>
<dbReference type="InterPro" id="IPR005905">
    <property type="entry name" value="D_ala_D_ala"/>
</dbReference>
<dbReference type="InterPro" id="IPR011095">
    <property type="entry name" value="Dala_Dala_lig_C"/>
</dbReference>
<dbReference type="InterPro" id="IPR011127">
    <property type="entry name" value="Dala_Dala_lig_N"/>
</dbReference>
<dbReference type="InterPro" id="IPR016185">
    <property type="entry name" value="PreATP-grasp_dom_sf"/>
</dbReference>
<dbReference type="NCBIfam" id="TIGR01205">
    <property type="entry name" value="D_ala_D_alaTIGR"/>
    <property type="match status" value="1"/>
</dbReference>
<dbReference type="NCBIfam" id="NF002528">
    <property type="entry name" value="PRK01966.1-4"/>
    <property type="match status" value="1"/>
</dbReference>
<dbReference type="PANTHER" id="PTHR23132">
    <property type="entry name" value="D-ALANINE--D-ALANINE LIGASE"/>
    <property type="match status" value="1"/>
</dbReference>
<dbReference type="PANTHER" id="PTHR23132:SF25">
    <property type="entry name" value="D-ALANINE--D-ALANINE LIGASE A"/>
    <property type="match status" value="1"/>
</dbReference>
<dbReference type="Pfam" id="PF07478">
    <property type="entry name" value="Dala_Dala_lig_C"/>
    <property type="match status" value="1"/>
</dbReference>
<dbReference type="Pfam" id="PF01820">
    <property type="entry name" value="Dala_Dala_lig_N"/>
    <property type="match status" value="1"/>
</dbReference>
<dbReference type="PIRSF" id="PIRSF039102">
    <property type="entry name" value="Ddl/VanB"/>
    <property type="match status" value="1"/>
</dbReference>
<dbReference type="SUPFAM" id="SSF56059">
    <property type="entry name" value="Glutathione synthetase ATP-binding domain-like"/>
    <property type="match status" value="1"/>
</dbReference>
<dbReference type="SUPFAM" id="SSF52440">
    <property type="entry name" value="PreATP-grasp domain"/>
    <property type="match status" value="1"/>
</dbReference>
<dbReference type="PROSITE" id="PS50975">
    <property type="entry name" value="ATP_GRASP"/>
    <property type="match status" value="1"/>
</dbReference>
<dbReference type="PROSITE" id="PS00843">
    <property type="entry name" value="DALA_DALA_LIGASE_1"/>
    <property type="match status" value="1"/>
</dbReference>
<dbReference type="PROSITE" id="PS00844">
    <property type="entry name" value="DALA_DALA_LIGASE_2"/>
    <property type="match status" value="1"/>
</dbReference>
<keyword id="KW-0067">ATP-binding</keyword>
<keyword id="KW-0133">Cell shape</keyword>
<keyword id="KW-0961">Cell wall biogenesis/degradation</keyword>
<keyword id="KW-0963">Cytoplasm</keyword>
<keyword id="KW-0436">Ligase</keyword>
<keyword id="KW-0460">Magnesium</keyword>
<keyword id="KW-0464">Manganese</keyword>
<keyword id="KW-0479">Metal-binding</keyword>
<keyword id="KW-0547">Nucleotide-binding</keyword>
<keyword id="KW-0573">Peptidoglycan synthesis</keyword>
<keyword id="KW-1185">Reference proteome</keyword>